<gene>
    <name evidence="5" type="primary">LIN</name>
</gene>
<proteinExistence type="evidence at transcript level"/>
<comment type="function">
    <text evidence="3 4 6">Putative E3 ubiquitin ligase involved in the rhizobial infection process (PubMed:19776163). Plays an important role in the early steps of bacterial symbiont thread formation in roots, and in growth, differentiation and maintenance of nodules (PubMed:15516512, PubMed:19776163).</text>
</comment>
<comment type="catalytic activity">
    <reaction evidence="6">
        <text>S-ubiquitinyl-[E2 ubiquitin-conjugating enzyme]-L-cysteine + [acceptor protein]-L-lysine = [E2 ubiquitin-conjugating enzyme]-L-cysteine + N(6)-ubiquitinyl-[acceptor protein]-L-lysine.</text>
        <dbReference type="EC" id="2.3.2.27"/>
    </reaction>
</comment>
<comment type="pathway">
    <text evidence="6">Protein modification; protein ubiquitination.</text>
</comment>
<comment type="tissue specificity">
    <text evidence="4">Expressed in roots and nodules.</text>
</comment>
<comment type="induction">
    <text evidence="4">By rhizobial infection. Promoter activity is detected at 3 days post-inoculation (dpi) in dividing cortical cells in roots and at 6 dpi in young emerging nodules. At 21 dpi strong promoter activity is detected in mature nodules in the nodule apices including the infection zone, with lower activity detected in the nitrogen-fixing zone.</text>
</comment>
<comment type="disruption phenotype">
    <text evidence="3">Defective in intermediate steps of nodule differentiation leading to a strong reduction in the number of infections, mainly arrested in the root epidermis, thus producing nodule primordia that initiate normally but fail to mature (small white bumps).</text>
</comment>
<name>LIN_MEDTR</name>
<dbReference type="EC" id="2.3.2.27" evidence="6"/>
<dbReference type="EMBL" id="EU926660">
    <property type="protein sequence ID" value="ACL14419.1"/>
    <property type="molecule type" value="Genomic_DNA"/>
</dbReference>
<dbReference type="EMBL" id="EU926661">
    <property type="protein sequence ID" value="ACL14420.1"/>
    <property type="molecule type" value="mRNA"/>
</dbReference>
<dbReference type="SMR" id="D1FP53"/>
<dbReference type="PaxDb" id="3880-AES61911"/>
<dbReference type="GeneID" id="11418360"/>
<dbReference type="KEGG" id="mtr:11418360"/>
<dbReference type="eggNOG" id="KOG0167">
    <property type="taxonomic scope" value="Eukaryota"/>
</dbReference>
<dbReference type="OrthoDB" id="6252103at2759"/>
<dbReference type="UniPathway" id="UPA00143"/>
<dbReference type="ExpressionAtlas" id="D1FP53">
    <property type="expression patterns" value="differential"/>
</dbReference>
<dbReference type="GO" id="GO:0004842">
    <property type="term" value="F:ubiquitin-protein transferase activity"/>
    <property type="evidence" value="ECO:0007669"/>
    <property type="project" value="InterPro"/>
</dbReference>
<dbReference type="GO" id="GO:0009877">
    <property type="term" value="P:nodulation"/>
    <property type="evidence" value="ECO:0007669"/>
    <property type="project" value="UniProtKB-KW"/>
</dbReference>
<dbReference type="GO" id="GO:0016567">
    <property type="term" value="P:protein ubiquitination"/>
    <property type="evidence" value="ECO:0007669"/>
    <property type="project" value="UniProtKB-UniPathway"/>
</dbReference>
<dbReference type="CDD" id="cd16664">
    <property type="entry name" value="RING-Ubox_PUB"/>
    <property type="match status" value="1"/>
</dbReference>
<dbReference type="Gene3D" id="1.25.10.10">
    <property type="entry name" value="Leucine-rich Repeat Variant"/>
    <property type="match status" value="1"/>
</dbReference>
<dbReference type="Gene3D" id="2.130.10.10">
    <property type="entry name" value="YVTN repeat-like/Quinoprotein amine dehydrogenase"/>
    <property type="match status" value="1"/>
</dbReference>
<dbReference type="Gene3D" id="3.30.40.10">
    <property type="entry name" value="Zinc/RING finger domain, C3HC4 (zinc finger)"/>
    <property type="match status" value="1"/>
</dbReference>
<dbReference type="InterPro" id="IPR011989">
    <property type="entry name" value="ARM-like"/>
</dbReference>
<dbReference type="InterPro" id="IPR016024">
    <property type="entry name" value="ARM-type_fold"/>
</dbReference>
<dbReference type="InterPro" id="IPR055566">
    <property type="entry name" value="ARM_LIN"/>
</dbReference>
<dbReference type="InterPro" id="IPR056514">
    <property type="entry name" value="ARM_LIN_2nd"/>
</dbReference>
<dbReference type="InterPro" id="IPR052858">
    <property type="entry name" value="E3_ubiquitin-ligase_LIN"/>
</dbReference>
<dbReference type="InterPro" id="IPR056512">
    <property type="entry name" value="LIN_N"/>
</dbReference>
<dbReference type="InterPro" id="IPR045210">
    <property type="entry name" value="RING-Ubox_PUB"/>
</dbReference>
<dbReference type="InterPro" id="IPR003613">
    <property type="entry name" value="Ubox_domain"/>
</dbReference>
<dbReference type="InterPro" id="IPR015943">
    <property type="entry name" value="WD40/YVTN_repeat-like_dom_sf"/>
</dbReference>
<dbReference type="InterPro" id="IPR036322">
    <property type="entry name" value="WD40_repeat_dom_sf"/>
</dbReference>
<dbReference type="InterPro" id="IPR001680">
    <property type="entry name" value="WD40_rpt"/>
</dbReference>
<dbReference type="InterPro" id="IPR013083">
    <property type="entry name" value="Znf_RING/FYVE/PHD"/>
</dbReference>
<dbReference type="PANTHER" id="PTHR47446">
    <property type="entry name" value="RING-TYPE E3 UBIQUITIN TRANSFERASE"/>
    <property type="match status" value="1"/>
</dbReference>
<dbReference type="PANTHER" id="PTHR47446:SF3">
    <property type="entry name" value="RING-TYPE E3 UBIQUITIN TRANSFERASE"/>
    <property type="match status" value="1"/>
</dbReference>
<dbReference type="Pfam" id="PF23568">
    <property type="entry name" value="ARM_LIN"/>
    <property type="match status" value="1"/>
</dbReference>
<dbReference type="Pfam" id="PF23654">
    <property type="entry name" value="ARM_LIN_2nd"/>
    <property type="match status" value="1"/>
</dbReference>
<dbReference type="Pfam" id="PF23628">
    <property type="entry name" value="ARM_LIN_C"/>
    <property type="match status" value="1"/>
</dbReference>
<dbReference type="Pfam" id="PF04564">
    <property type="entry name" value="U-box"/>
    <property type="match status" value="1"/>
</dbReference>
<dbReference type="Pfam" id="PF00400">
    <property type="entry name" value="WD40"/>
    <property type="match status" value="3"/>
</dbReference>
<dbReference type="SMART" id="SM00504">
    <property type="entry name" value="Ubox"/>
    <property type="match status" value="1"/>
</dbReference>
<dbReference type="SMART" id="SM00320">
    <property type="entry name" value="WD40"/>
    <property type="match status" value="3"/>
</dbReference>
<dbReference type="SUPFAM" id="SSF48371">
    <property type="entry name" value="ARM repeat"/>
    <property type="match status" value="1"/>
</dbReference>
<dbReference type="SUPFAM" id="SSF57850">
    <property type="entry name" value="RING/U-box"/>
    <property type="match status" value="1"/>
</dbReference>
<dbReference type="SUPFAM" id="SSF50978">
    <property type="entry name" value="WD40 repeat-like"/>
    <property type="match status" value="1"/>
</dbReference>
<dbReference type="PROSITE" id="PS51698">
    <property type="entry name" value="U_BOX"/>
    <property type="match status" value="1"/>
</dbReference>
<dbReference type="PROSITE" id="PS00678">
    <property type="entry name" value="WD_REPEATS_1"/>
    <property type="match status" value="1"/>
</dbReference>
<dbReference type="PROSITE" id="PS50082">
    <property type="entry name" value="WD_REPEATS_2"/>
    <property type="match status" value="3"/>
</dbReference>
<dbReference type="PROSITE" id="PS50294">
    <property type="entry name" value="WD_REPEATS_REGION"/>
    <property type="match status" value="2"/>
</dbReference>
<sequence length="1488" mass="166849">MSGNFRFMMDQKDIVRFLTTTIDSFIQDRLINKEQRTQHKDQCAERLAAEDGNTDKETEVEYSDQAVLANLDWGIEALEEAINTYNMETKLARLDYAEKMLQVCAMLNPKQKTAGVPNSYLSAWAHLNLSYLWKLRNNIKSCIYHSLEMFIVDPFFSRIDFAPELWKNLFLPHMSSIVGWYSEERHKLMMEVLPESTDFSYTADFDKVFNESLVFSMRPNQLEKLQKLEQLYGESLDENTRLYAKYYNDCMNPDSTSSKKVVPMLPIAEPPMTPLHELSRSVPDFVKFGPILPKSSGFSMTTRRSNDGLNETTRENIASNSNHSKGEQSSLWAAKESIIEEIEDDLDSEHYDASVDSDKINIFSPEPKKNIKDEDVEPKVYRSNQKNQMNSPNISPMESPRRASNYSSTNPLRRKKESKFLRLLSNRFTGSIVSDHSLSSSPDTSSDHIFTGDEEVMVRNNIKRKNDSQTPSMNQDNENSLVLNDSSHCESEDGYQSSSSFPKLEKLTIGSKPPKDFVCPITGQIFSDPVTLETGQTYERKAIQEWLGTGNTTCPITRQALSANILPKTNYVLKRLIVSWKEQNPELAQEFSNSNTPRGSSCSPSAKDITMVSSIQRTTDSPSQKYKDDYIRQRNNRFTRVSVGASPTSVLSQAAVETIINSLTPYITSLCTSENLQDCEQAVLEIARLWKDSKTDPQIHSYLSKPTVVSGLVEILSASLNREVLRRSIYILSELIFSDERVGETLNSVDSDFDCLAMLLKNGLAEAALLIYQLRPVFAQLSEHELIPSLIQVIQNKSEDIDDFQLAIDPKAAAIAILEQILIGGDEYNRSVNASSVISANGIPAIVKYLDKTEGRRPVISILLCCMQAEKSCKSSIANRIELSPVLELFHAGNDSVRGICVEFLSELVRLNRRTSSNQTLQIIKDEGAFSTMHTFLVYLQMAPMEHQIAVASLLLQLDLLAEPRKMSIYREEAVETLIEALWQKDFSNNQMKALDALLFLIGHVTSSGKSYTEAGLLKIAGFDQPYNVLMKAEQLGHSDNDFMETMEDEKNAMKSWQKRVASVLCNHENGSIFQALEECLKSNSLKMAKSCLVLATWLTHMLFTLPDTGVRDVARKSLLEALMNVLQSSKNLEEKILASLALKSFISDPTVHEVLRVYAKSIYRILRKLKKYSTVAADILKALLNLNSVDVTELWSCKEVVELDLSSNGEVLSLHYLNGQVLSGHADGTIKVWDARKRIPRVIQETREHKKAVTSLCSSVDKLYSSSLDKTIRVWTIKPDGIKCIDVYDVKEAVYELAANAKLACYVTQGTGVKVFNWLDAPKFINFNKYVKCLAVSGDKLYCGCSGYSIQEVDLSKYTSTSFFTGTRKLLGKQTIHSLQIHDDLLFACGSSIDATAGKIFSLSSKMVVGSLSTGLDVHRVAINSDFIFAGTKFGTIEVWLKDKFTRVASIKMAGGNTKITSLASDADGMMLFVGSSDGKIQVWALD</sequence>
<keyword id="KW-0536">Nodulation</keyword>
<keyword id="KW-0677">Repeat</keyword>
<keyword id="KW-0808">Transferase</keyword>
<keyword id="KW-0853">WD repeat</keyword>
<evidence type="ECO:0000255" key="1"/>
<evidence type="ECO:0000256" key="2">
    <source>
        <dbReference type="SAM" id="MobiDB-lite"/>
    </source>
</evidence>
<evidence type="ECO:0000269" key="3">
    <source>
    </source>
</evidence>
<evidence type="ECO:0000269" key="4">
    <source>
    </source>
</evidence>
<evidence type="ECO:0000303" key="5">
    <source>
    </source>
</evidence>
<evidence type="ECO:0000303" key="6">
    <source>
    </source>
</evidence>
<evidence type="ECO:0000305" key="7"/>
<feature type="chain" id="PRO_0000413001" description="Putative E3 ubiquitin-protein ligase LIN">
    <location>
        <begin position="1"/>
        <end position="1488"/>
    </location>
</feature>
<feature type="domain" description="U-box">
    <location>
        <begin position="512"/>
        <end position="587"/>
    </location>
</feature>
<feature type="repeat" description="WD 1" evidence="1">
    <location>
        <begin position="1207"/>
        <end position="1244"/>
    </location>
</feature>
<feature type="repeat" description="WD 2" evidence="1">
    <location>
        <begin position="1249"/>
        <end position="1290"/>
    </location>
</feature>
<feature type="repeat" description="WD 3" evidence="1">
    <location>
        <begin position="1412"/>
        <end position="1451"/>
    </location>
</feature>
<feature type="repeat" description="WD 4" evidence="1">
    <location>
        <begin position="1456"/>
        <end position="1488"/>
    </location>
</feature>
<feature type="region of interest" description="Disordered" evidence="2">
    <location>
        <begin position="297"/>
        <end position="330"/>
    </location>
</feature>
<feature type="region of interest" description="Disordered" evidence="2">
    <location>
        <begin position="351"/>
        <end position="414"/>
    </location>
</feature>
<feature type="region of interest" description="Disordered" evidence="2">
    <location>
        <begin position="432"/>
        <end position="500"/>
    </location>
</feature>
<feature type="compositionally biased region" description="Basic and acidic residues" evidence="2">
    <location>
        <begin position="366"/>
        <end position="380"/>
    </location>
</feature>
<feature type="compositionally biased region" description="Polar residues" evidence="2">
    <location>
        <begin position="382"/>
        <end position="411"/>
    </location>
</feature>
<feature type="compositionally biased region" description="Low complexity" evidence="2">
    <location>
        <begin position="432"/>
        <end position="444"/>
    </location>
</feature>
<feature type="compositionally biased region" description="Polar residues" evidence="2">
    <location>
        <begin position="468"/>
        <end position="486"/>
    </location>
</feature>
<protein>
    <recommendedName>
        <fullName>Putative E3 ubiquitin-protein ligase LIN</fullName>
        <shortName evidence="6">MtLIN</shortName>
        <ecNumber evidence="6">2.3.2.27</ecNumber>
    </recommendedName>
    <alternativeName>
        <fullName evidence="5">Protein LUMPY INFECTIONS</fullName>
    </alternativeName>
    <alternativeName>
        <fullName evidence="7">RING-type E3 ubiquitin transferase</fullName>
    </alternativeName>
</protein>
<accession>D1FP53</accession>
<organism>
    <name type="scientific">Medicago truncatula</name>
    <name type="common">Barrel medic</name>
    <name type="synonym">Medicago tribuloides</name>
    <dbReference type="NCBI Taxonomy" id="3880"/>
    <lineage>
        <taxon>Eukaryota</taxon>
        <taxon>Viridiplantae</taxon>
        <taxon>Streptophyta</taxon>
        <taxon>Embryophyta</taxon>
        <taxon>Tracheophyta</taxon>
        <taxon>Spermatophyta</taxon>
        <taxon>Magnoliopsida</taxon>
        <taxon>eudicotyledons</taxon>
        <taxon>Gunneridae</taxon>
        <taxon>Pentapetalae</taxon>
        <taxon>rosids</taxon>
        <taxon>fabids</taxon>
        <taxon>Fabales</taxon>
        <taxon>Fabaceae</taxon>
        <taxon>Papilionoideae</taxon>
        <taxon>50 kb inversion clade</taxon>
        <taxon>NPAAA clade</taxon>
        <taxon>Hologalegina</taxon>
        <taxon>IRL clade</taxon>
        <taxon>Trifolieae</taxon>
        <taxon>Medicago</taxon>
    </lineage>
</organism>
<reference key="1">
    <citation type="journal article" date="2009" name="Plant Physiol.">
        <title>LIN, a novel type of U-box/WD40 protein, controls early infection by rhizobia in legumes.</title>
        <authorList>
            <person name="Kiss E."/>
            <person name="Olah B."/>
            <person name="Kalo P."/>
            <person name="Morales M."/>
            <person name="Heckmann A.B."/>
            <person name="Borbola A."/>
            <person name="Lozsa A."/>
            <person name="Kontar K."/>
            <person name="Middleton P."/>
            <person name="Downie J.A."/>
            <person name="Oldroyd G.E."/>
            <person name="Endre G."/>
        </authorList>
    </citation>
    <scope>NUCLEOTIDE SEQUENCE [GENOMIC DNA / MRNA]</scope>
    <scope>FUNCTION</scope>
    <scope>TISSUE SPECIFICITY</scope>
    <scope>INDUCTION</scope>
</reference>
<reference key="2">
    <citation type="journal article" date="2004" name="Plant Physiol.">
        <title>LIN, a Medicago truncatula gene required for nodule differentiation and persistence of rhizobial infections.</title>
        <authorList>
            <person name="Kuppusamy K.T."/>
            <person name="Endre G."/>
            <person name="Prabhu R."/>
            <person name="Penmetsa R.V."/>
            <person name="Veereshlingam H."/>
            <person name="Cook D.R."/>
            <person name="Dickstein R."/>
            <person name="Vandenbosch K.A."/>
        </authorList>
    </citation>
    <scope>FUNCTION</scope>
    <scope>DISRUPTION PHENOTYPE</scope>
    <source>
        <strain>cv. Jemalong A17</strain>
    </source>
</reference>